<feature type="chain" id="PRO_0000084553" description="N-alpha-acetyltransferase 35, NatC auxiliary subunit">
    <location>
        <begin position="1"/>
        <end position="733"/>
    </location>
</feature>
<feature type="helix" evidence="5">
    <location>
        <begin position="3"/>
        <end position="8"/>
    </location>
</feature>
<feature type="turn" evidence="5">
    <location>
        <begin position="9"/>
        <end position="11"/>
    </location>
</feature>
<feature type="strand" evidence="5">
    <location>
        <begin position="19"/>
        <end position="21"/>
    </location>
</feature>
<feature type="helix" evidence="5">
    <location>
        <begin position="23"/>
        <end position="32"/>
    </location>
</feature>
<feature type="strand" evidence="5">
    <location>
        <begin position="38"/>
        <end position="40"/>
    </location>
</feature>
<feature type="helix" evidence="5">
    <location>
        <begin position="46"/>
        <end position="51"/>
    </location>
</feature>
<feature type="turn" evidence="5">
    <location>
        <begin position="58"/>
        <end position="60"/>
    </location>
</feature>
<feature type="helix" evidence="5">
    <location>
        <begin position="62"/>
        <end position="64"/>
    </location>
</feature>
<feature type="helix" evidence="5">
    <location>
        <begin position="69"/>
        <end position="73"/>
    </location>
</feature>
<feature type="helix" evidence="5">
    <location>
        <begin position="83"/>
        <end position="102"/>
    </location>
</feature>
<feature type="turn" evidence="5">
    <location>
        <begin position="109"/>
        <end position="111"/>
    </location>
</feature>
<feature type="helix" evidence="5">
    <location>
        <begin position="112"/>
        <end position="114"/>
    </location>
</feature>
<feature type="helix" evidence="5">
    <location>
        <begin position="116"/>
        <end position="127"/>
    </location>
</feature>
<feature type="helix" evidence="5">
    <location>
        <begin position="140"/>
        <end position="143"/>
    </location>
</feature>
<feature type="helix" evidence="5">
    <location>
        <begin position="145"/>
        <end position="165"/>
    </location>
</feature>
<feature type="turn" evidence="5">
    <location>
        <begin position="171"/>
        <end position="173"/>
    </location>
</feature>
<feature type="turn" evidence="7">
    <location>
        <begin position="185"/>
        <end position="187"/>
    </location>
</feature>
<feature type="helix" evidence="5">
    <location>
        <begin position="191"/>
        <end position="207"/>
    </location>
</feature>
<feature type="helix" evidence="5">
    <location>
        <begin position="213"/>
        <end position="229"/>
    </location>
</feature>
<feature type="helix" evidence="5">
    <location>
        <begin position="230"/>
        <end position="232"/>
    </location>
</feature>
<feature type="helix" evidence="5">
    <location>
        <begin position="233"/>
        <end position="236"/>
    </location>
</feature>
<feature type="helix" evidence="5">
    <location>
        <begin position="243"/>
        <end position="258"/>
    </location>
</feature>
<feature type="helix" evidence="5">
    <location>
        <begin position="259"/>
        <end position="261"/>
    </location>
</feature>
<feature type="strand" evidence="6">
    <location>
        <begin position="270"/>
        <end position="273"/>
    </location>
</feature>
<feature type="helix" evidence="5">
    <location>
        <begin position="274"/>
        <end position="278"/>
    </location>
</feature>
<feature type="strand" evidence="5">
    <location>
        <begin position="293"/>
        <end position="295"/>
    </location>
</feature>
<feature type="helix" evidence="5">
    <location>
        <begin position="296"/>
        <end position="309"/>
    </location>
</feature>
<feature type="helix" evidence="5">
    <location>
        <begin position="310"/>
        <end position="313"/>
    </location>
</feature>
<feature type="helix" evidence="5">
    <location>
        <begin position="317"/>
        <end position="326"/>
    </location>
</feature>
<feature type="turn" evidence="5">
    <location>
        <begin position="327"/>
        <end position="329"/>
    </location>
</feature>
<feature type="helix" evidence="5">
    <location>
        <begin position="335"/>
        <end position="345"/>
    </location>
</feature>
<feature type="strand" evidence="6">
    <location>
        <begin position="350"/>
        <end position="352"/>
    </location>
</feature>
<feature type="turn" evidence="5">
    <location>
        <begin position="353"/>
        <end position="355"/>
    </location>
</feature>
<feature type="helix" evidence="5">
    <location>
        <begin position="358"/>
        <end position="370"/>
    </location>
</feature>
<feature type="helix" evidence="5">
    <location>
        <begin position="384"/>
        <end position="400"/>
    </location>
</feature>
<feature type="helix" evidence="5">
    <location>
        <begin position="404"/>
        <end position="427"/>
    </location>
</feature>
<feature type="helix" evidence="5">
    <location>
        <begin position="431"/>
        <end position="454"/>
    </location>
</feature>
<feature type="helix" evidence="5">
    <location>
        <begin position="460"/>
        <end position="462"/>
    </location>
</feature>
<feature type="helix" evidence="5">
    <location>
        <begin position="463"/>
        <end position="504"/>
    </location>
</feature>
<feature type="helix" evidence="5">
    <location>
        <begin position="509"/>
        <end position="524"/>
    </location>
</feature>
<feature type="helix" evidence="5">
    <location>
        <begin position="526"/>
        <end position="562"/>
    </location>
</feature>
<feature type="helix" evidence="5">
    <location>
        <begin position="579"/>
        <end position="586"/>
    </location>
</feature>
<feature type="helix" evidence="5">
    <location>
        <begin position="588"/>
        <end position="590"/>
    </location>
</feature>
<feature type="turn" evidence="5">
    <location>
        <begin position="594"/>
        <end position="597"/>
    </location>
</feature>
<feature type="helix" evidence="5">
    <location>
        <begin position="601"/>
        <end position="611"/>
    </location>
</feature>
<feature type="helix" evidence="5">
    <location>
        <begin position="617"/>
        <end position="651"/>
    </location>
</feature>
<feature type="strand" evidence="5">
    <location>
        <begin position="655"/>
        <end position="657"/>
    </location>
</feature>
<feature type="helix" evidence="5">
    <location>
        <begin position="663"/>
        <end position="665"/>
    </location>
</feature>
<feature type="helix" evidence="5">
    <location>
        <begin position="666"/>
        <end position="699"/>
    </location>
</feature>
<feature type="strand" evidence="7">
    <location>
        <begin position="700"/>
        <end position="702"/>
    </location>
</feature>
<feature type="strand" evidence="5">
    <location>
        <begin position="706"/>
        <end position="711"/>
    </location>
</feature>
<feature type="strand" evidence="5">
    <location>
        <begin position="722"/>
        <end position="727"/>
    </location>
</feature>
<proteinExistence type="evidence at protein level"/>
<name>NAA35_YEAST</name>
<keyword id="KW-0002">3D-structure</keyword>
<keyword id="KW-0963">Cytoplasm</keyword>
<keyword id="KW-1185">Reference proteome</keyword>
<protein>
    <recommendedName>
        <fullName>N-alpha-acetyltransferase 35, NatC auxiliary subunit</fullName>
    </recommendedName>
    <alternativeName>
        <fullName>Glucose repressible protein MAK10</fullName>
    </alternativeName>
    <alternativeName>
        <fullName>L-A virus GAG protein N-acetyltransferase subunit MAK10</fullName>
    </alternativeName>
    <alternativeName>
        <fullName>Maintenance of killer protein 10</fullName>
    </alternativeName>
    <alternativeName>
        <fullName>N-terminal acetyltransferase C complex subunit MAK10</fullName>
        <shortName>NatC complex subunit MAK10</shortName>
    </alternativeName>
</protein>
<gene>
    <name type="primary">MAK10</name>
    <name type="synonym">NAA35</name>
    <name type="ordered locus">YEL053C</name>
</gene>
<sequence length="733" mass="84302">MEVDSILGSLSITDDFDQLVDVTSLFDELCSKLKPEAIVKDPRFDLFEGTHSLEVNNSKLDSSLIELTAEEIEFDVNVAYDPPLASVAAIADRLLRCVISWLNDYQTLPTTVLSCRYTESLLSSLVKGTTAGSSWCTGNILYDKVLGSCILGVCYLTKFVQKLLSAGIVFEEEDLNFNNMGFNTFDNLPGQDVVINSLTESLQILEAYSDDSLHLTMLKHILKIIICLVHLEDHLTDYSTKTSHLDELIENANSVNGIFPQLQLSPPKGAFSTYIQKHRSNQFPPRKITKLPTDYSGFITLANDVKTILLVDKAESALETYQFAKFFNKLEQRHVIARILFPLFFIRDDRTVLGKFSYTQFYLLHVKEFSAQTPSEFESSIGNELIQESSNMLLEWYQNCSQNTCRYRQGFNRQLILWDSLQAQFESVNSQVYCSWTYFMKLSSMIEFSLKGFDLDIYKPFEAYSMFWYVYYLSHHLETFLKDSQNDIESNINAIHSMNKKLKKLKAGEKKDQLRLKYRFAMDNEMEQLQATKQFLNYLLKEINITKSLCLIEVFQFAILKSFGLIDNKNSTPSKFSNERLIHNLRFKPFNSIGVPELPEYEVFQQTLKDFVIEEKGAAFDIKLERATNFIETEVRNVVSSIDEIMQGIKGGDNNGVLVTGTRLVQELSLEYYCKLKHTSKALSVNSKVIVNTLKKNIKNKDSHEYKVELVHTTEGWNYFPIQTLRIKQDRYK</sequence>
<accession>Q02197</accession>
<accession>D3DLJ7</accession>
<reference key="1">
    <citation type="journal article" date="1992" name="Genetics">
        <title>MAK10, a glucose-repressible gene necessary for replication of a dsRNA virus of Saccharomyces cerevisiae, has T cell receptor alpha-subunit motifs.</title>
        <authorList>
            <person name="Lee Y.-J."/>
            <person name="Wickner R.B."/>
        </authorList>
    </citation>
    <scope>NUCLEOTIDE SEQUENCE [GENOMIC RNA]</scope>
</reference>
<reference key="2">
    <citation type="journal article" date="1997" name="Nature">
        <title>The nucleotide sequence of Saccharomyces cerevisiae chromosome V.</title>
        <authorList>
            <person name="Dietrich F.S."/>
            <person name="Mulligan J.T."/>
            <person name="Hennessy K.M."/>
            <person name="Yelton M.A."/>
            <person name="Allen E."/>
            <person name="Araujo R."/>
            <person name="Aviles E."/>
            <person name="Berno A."/>
            <person name="Brennan T."/>
            <person name="Carpenter J."/>
            <person name="Chen E."/>
            <person name="Cherry J.M."/>
            <person name="Chung E."/>
            <person name="Duncan M."/>
            <person name="Guzman E."/>
            <person name="Hartzell G."/>
            <person name="Hunicke-Smith S."/>
            <person name="Hyman R.W."/>
            <person name="Kayser A."/>
            <person name="Komp C."/>
            <person name="Lashkari D."/>
            <person name="Lew H."/>
            <person name="Lin D."/>
            <person name="Mosedale D."/>
            <person name="Nakahara K."/>
            <person name="Namath A."/>
            <person name="Norgren R."/>
            <person name="Oefner P."/>
            <person name="Oh C."/>
            <person name="Petel F.X."/>
            <person name="Roberts D."/>
            <person name="Sehl P."/>
            <person name="Schramm S."/>
            <person name="Shogren T."/>
            <person name="Smith V."/>
            <person name="Taylor P."/>
            <person name="Wei Y."/>
            <person name="Botstein D."/>
            <person name="Davis R.W."/>
        </authorList>
    </citation>
    <scope>NUCLEOTIDE SEQUENCE [LARGE SCALE GENOMIC DNA]</scope>
    <source>
        <strain>ATCC 204508 / S288c</strain>
    </source>
</reference>
<reference key="3">
    <citation type="journal article" date="2014" name="G3 (Bethesda)">
        <title>The reference genome sequence of Saccharomyces cerevisiae: Then and now.</title>
        <authorList>
            <person name="Engel S.R."/>
            <person name="Dietrich F.S."/>
            <person name="Fisk D.G."/>
            <person name="Binkley G."/>
            <person name="Balakrishnan R."/>
            <person name="Costanzo M.C."/>
            <person name="Dwight S.S."/>
            <person name="Hitz B.C."/>
            <person name="Karra K."/>
            <person name="Nash R.S."/>
            <person name="Weng S."/>
            <person name="Wong E.D."/>
            <person name="Lloyd P."/>
            <person name="Skrzypek M.S."/>
            <person name="Miyasato S.R."/>
            <person name="Simison M."/>
            <person name="Cherry J.M."/>
        </authorList>
    </citation>
    <scope>GENOME REANNOTATION</scope>
    <source>
        <strain>ATCC 204508 / S288c</strain>
    </source>
</reference>
<reference key="4">
    <citation type="journal article" date="2001" name="J. Biol. Chem.">
        <title>NatC Nalpha-terminal acetyltransferase of yeast contains three subunits, Mak3p, Mak10p, and Mak31p.</title>
        <authorList>
            <person name="Polevoda B."/>
            <person name="Sherman F."/>
        </authorList>
    </citation>
    <scope>IDENTIFICATION IN THE NATC COMPLEX</scope>
    <scope>FUNCTION OF THE NATC COMPLEX</scope>
</reference>
<reference key="5">
    <citation type="journal article" date="2003" name="Nature">
        <title>Global analysis of protein localization in budding yeast.</title>
        <authorList>
            <person name="Huh W.-K."/>
            <person name="Falvo J.V."/>
            <person name="Gerke L.C."/>
            <person name="Carroll A.S."/>
            <person name="Howson R.W."/>
            <person name="Weissman J.S."/>
            <person name="O'Shea E.K."/>
        </authorList>
    </citation>
    <scope>SUBCELLULAR LOCATION [LARGE SCALE ANALYSIS]</scope>
</reference>
<reference key="6">
    <citation type="journal article" date="2003" name="Nature">
        <title>Global analysis of protein expression in yeast.</title>
        <authorList>
            <person name="Ghaemmaghami S."/>
            <person name="Huh W.-K."/>
            <person name="Bower K."/>
            <person name="Howson R.W."/>
            <person name="Belle A."/>
            <person name="Dephoure N."/>
            <person name="O'Shea E.K."/>
            <person name="Weissman J.S."/>
        </authorList>
    </citation>
    <scope>LEVEL OF PROTEIN EXPRESSION [LARGE SCALE ANALYSIS]</scope>
</reference>
<dbReference type="EMBL" id="M94533">
    <property type="protein sequence ID" value="AAA34749.1"/>
    <property type="molecule type" value="Genomic_RNA"/>
</dbReference>
<dbReference type="EMBL" id="U18779">
    <property type="protein sequence ID" value="AAB64989.1"/>
    <property type="molecule type" value="Genomic_DNA"/>
</dbReference>
<dbReference type="EMBL" id="BK006939">
    <property type="protein sequence ID" value="DAA07601.1"/>
    <property type="molecule type" value="Genomic_DNA"/>
</dbReference>
<dbReference type="PIR" id="S31288">
    <property type="entry name" value="S31288"/>
</dbReference>
<dbReference type="RefSeq" id="NP_010861.3">
    <property type="nucleotide sequence ID" value="NM_001178868.3"/>
</dbReference>
<dbReference type="PDB" id="6YGA">
    <property type="method" value="X-ray"/>
    <property type="resolution" value="2.40 A"/>
    <property type="chains" value="B=1-733"/>
</dbReference>
<dbReference type="PDB" id="6YGB">
    <property type="method" value="X-ray"/>
    <property type="resolution" value="2.45 A"/>
    <property type="chains" value="B=1-733"/>
</dbReference>
<dbReference type="PDB" id="6YGC">
    <property type="method" value="X-ray"/>
    <property type="resolution" value="2.99 A"/>
    <property type="chains" value="B=1-733"/>
</dbReference>
<dbReference type="PDB" id="6YGD">
    <property type="method" value="X-ray"/>
    <property type="resolution" value="2.75 A"/>
    <property type="chains" value="B=1-733"/>
</dbReference>
<dbReference type="PDBsum" id="6YGA"/>
<dbReference type="PDBsum" id="6YGB"/>
<dbReference type="PDBsum" id="6YGC"/>
<dbReference type="PDBsum" id="6YGD"/>
<dbReference type="SMR" id="Q02197"/>
<dbReference type="BioGRID" id="36676">
    <property type="interactions" value="81"/>
</dbReference>
<dbReference type="ComplexPortal" id="CPX-781">
    <property type="entry name" value="NatC N-alpha-acetyltransferase complex"/>
</dbReference>
<dbReference type="DIP" id="DIP-1428N"/>
<dbReference type="FunCoup" id="Q02197">
    <property type="interactions" value="723"/>
</dbReference>
<dbReference type="IntAct" id="Q02197">
    <property type="interactions" value="6"/>
</dbReference>
<dbReference type="MINT" id="Q02197"/>
<dbReference type="STRING" id="4932.YEL053C"/>
<dbReference type="iPTMnet" id="Q02197"/>
<dbReference type="PaxDb" id="4932-YEL053C"/>
<dbReference type="PeptideAtlas" id="Q02197"/>
<dbReference type="EnsemblFungi" id="YEL053C_mRNA">
    <property type="protein sequence ID" value="YEL053C"/>
    <property type="gene ID" value="YEL053C"/>
</dbReference>
<dbReference type="GeneID" id="856657"/>
<dbReference type="KEGG" id="sce:YEL053C"/>
<dbReference type="AGR" id="SGD:S000000779"/>
<dbReference type="SGD" id="S000000779">
    <property type="gene designation" value="MAK10"/>
</dbReference>
<dbReference type="VEuPathDB" id="FungiDB:YEL053C"/>
<dbReference type="eggNOG" id="KOG2343">
    <property type="taxonomic scope" value="Eukaryota"/>
</dbReference>
<dbReference type="GeneTree" id="ENSGT00390000002445"/>
<dbReference type="HOGENOM" id="CLU_022669_1_0_1"/>
<dbReference type="InParanoid" id="Q02197"/>
<dbReference type="OMA" id="QMEWIVQ"/>
<dbReference type="OrthoDB" id="269405at2759"/>
<dbReference type="BioCyc" id="YEAST:G3O-30171-MONOMER"/>
<dbReference type="BioGRID-ORCS" id="856657">
    <property type="hits" value="0 hits in 10 CRISPR screens"/>
</dbReference>
<dbReference type="PRO" id="PR:Q02197"/>
<dbReference type="Proteomes" id="UP000002311">
    <property type="component" value="Chromosome V"/>
</dbReference>
<dbReference type="RNAct" id="Q02197">
    <property type="molecule type" value="protein"/>
</dbReference>
<dbReference type="GO" id="GO:0005737">
    <property type="term" value="C:cytoplasm"/>
    <property type="evidence" value="ECO:0007005"/>
    <property type="project" value="SGD"/>
</dbReference>
<dbReference type="GO" id="GO:0005829">
    <property type="term" value="C:cytosol"/>
    <property type="evidence" value="ECO:0000304"/>
    <property type="project" value="Reactome"/>
</dbReference>
<dbReference type="GO" id="GO:0031417">
    <property type="term" value="C:NatC complex"/>
    <property type="evidence" value="ECO:0000314"/>
    <property type="project" value="SGD"/>
</dbReference>
<dbReference type="GO" id="GO:0016236">
    <property type="term" value="P:macroautophagy"/>
    <property type="evidence" value="ECO:0000315"/>
    <property type="project" value="SGD"/>
</dbReference>
<dbReference type="InterPro" id="IPR007244">
    <property type="entry name" value="Naa35/Mak10"/>
</dbReference>
<dbReference type="PANTHER" id="PTHR21373">
    <property type="entry name" value="GLUCOSE REPRESSIBLE PROTEIN MAK10"/>
    <property type="match status" value="1"/>
</dbReference>
<dbReference type="PANTHER" id="PTHR21373:SF0">
    <property type="entry name" value="N-ALPHA-ACETYLTRANSFERASE 35, NATC AUXILIARY SUBUNIT"/>
    <property type="match status" value="1"/>
</dbReference>
<dbReference type="Pfam" id="PF04112">
    <property type="entry name" value="Mak10"/>
    <property type="match status" value="1"/>
</dbReference>
<comment type="function">
    <text evidence="1">Component of the NatC N-terminal acetyltransferase, which catalyzes acetylation of the N-terminus Met of L-A virus Gag protein. MAK10 has a role in the propagation of L-A and M viruses, perhaps in the viral assembly. It is apparently directly needed for optimum respiration.</text>
</comment>
<comment type="subunit">
    <text evidence="1">Component of the N-terminal acetyltransferase C (NatC) complex, which is composed of MAK3, MAK10 and MAK31.</text>
</comment>
<comment type="interaction">
    <interactant intactId="EBI-10924">
        <id>Q02197</id>
    </interactant>
    <interactant intactId="EBI-10388">
        <id>Q03503</id>
        <label>MAK3</label>
    </interactant>
    <organismsDiffer>false</organismsDiffer>
    <experiments>4</experiments>
</comment>
<comment type="subcellular location">
    <subcellularLocation>
        <location evidence="2">Cytoplasm</location>
    </subcellularLocation>
</comment>
<comment type="induction">
    <text>Glucose-repressed.</text>
</comment>
<comment type="miscellaneous">
    <text evidence="3">Present with 1970 molecules/cell in log phase SD medium.</text>
</comment>
<comment type="similarity">
    <text evidence="4">Belongs to the MAK10 family.</text>
</comment>
<evidence type="ECO:0000269" key="1">
    <source>
    </source>
</evidence>
<evidence type="ECO:0000269" key="2">
    <source>
    </source>
</evidence>
<evidence type="ECO:0000269" key="3">
    <source>
    </source>
</evidence>
<evidence type="ECO:0000305" key="4"/>
<evidence type="ECO:0007829" key="5">
    <source>
        <dbReference type="PDB" id="6YGA"/>
    </source>
</evidence>
<evidence type="ECO:0007829" key="6">
    <source>
        <dbReference type="PDB" id="6YGB"/>
    </source>
</evidence>
<evidence type="ECO:0007829" key="7">
    <source>
        <dbReference type="PDB" id="6YGD"/>
    </source>
</evidence>
<organism>
    <name type="scientific">Saccharomyces cerevisiae (strain ATCC 204508 / S288c)</name>
    <name type="common">Baker's yeast</name>
    <dbReference type="NCBI Taxonomy" id="559292"/>
    <lineage>
        <taxon>Eukaryota</taxon>
        <taxon>Fungi</taxon>
        <taxon>Dikarya</taxon>
        <taxon>Ascomycota</taxon>
        <taxon>Saccharomycotina</taxon>
        <taxon>Saccharomycetes</taxon>
        <taxon>Saccharomycetales</taxon>
        <taxon>Saccharomycetaceae</taxon>
        <taxon>Saccharomyces</taxon>
    </lineage>
</organism>